<comment type="catalytic activity">
    <reaction evidence="1">
        <text>tRNA(Cys) + L-cysteine + ATP = L-cysteinyl-tRNA(Cys) + AMP + diphosphate</text>
        <dbReference type="Rhea" id="RHEA:17773"/>
        <dbReference type="Rhea" id="RHEA-COMP:9661"/>
        <dbReference type="Rhea" id="RHEA-COMP:9679"/>
        <dbReference type="ChEBI" id="CHEBI:30616"/>
        <dbReference type="ChEBI" id="CHEBI:33019"/>
        <dbReference type="ChEBI" id="CHEBI:35235"/>
        <dbReference type="ChEBI" id="CHEBI:78442"/>
        <dbReference type="ChEBI" id="CHEBI:78517"/>
        <dbReference type="ChEBI" id="CHEBI:456215"/>
        <dbReference type="EC" id="6.1.1.16"/>
    </reaction>
</comment>
<comment type="cofactor">
    <cofactor evidence="1">
        <name>Zn(2+)</name>
        <dbReference type="ChEBI" id="CHEBI:29105"/>
    </cofactor>
    <text evidence="1">Binds 1 zinc ion per subunit.</text>
</comment>
<comment type="subunit">
    <text evidence="1">Monomer.</text>
</comment>
<comment type="subcellular location">
    <subcellularLocation>
        <location evidence="1">Cytoplasm</location>
    </subcellularLocation>
</comment>
<comment type="similarity">
    <text evidence="1">Belongs to the class-I aminoacyl-tRNA synthetase family.</text>
</comment>
<dbReference type="EC" id="6.1.1.16" evidence="1"/>
<dbReference type="EMBL" id="AE017332">
    <property type="protein sequence ID" value="AAV28016.1"/>
    <property type="molecule type" value="Genomic_DNA"/>
</dbReference>
<dbReference type="RefSeq" id="WP_011206492.1">
    <property type="nucleotide sequence ID" value="NC_006360.1"/>
</dbReference>
<dbReference type="SMR" id="Q5ZZP6"/>
<dbReference type="KEGG" id="mhy:mhp661"/>
<dbReference type="eggNOG" id="COG0215">
    <property type="taxonomic scope" value="Bacteria"/>
</dbReference>
<dbReference type="HOGENOM" id="CLU_013528_0_0_14"/>
<dbReference type="PhylomeDB" id="Q5ZZP6"/>
<dbReference type="Proteomes" id="UP000006822">
    <property type="component" value="Chromosome"/>
</dbReference>
<dbReference type="GO" id="GO:0005829">
    <property type="term" value="C:cytosol"/>
    <property type="evidence" value="ECO:0007669"/>
    <property type="project" value="TreeGrafter"/>
</dbReference>
<dbReference type="GO" id="GO:0005524">
    <property type="term" value="F:ATP binding"/>
    <property type="evidence" value="ECO:0007669"/>
    <property type="project" value="UniProtKB-UniRule"/>
</dbReference>
<dbReference type="GO" id="GO:0004817">
    <property type="term" value="F:cysteine-tRNA ligase activity"/>
    <property type="evidence" value="ECO:0007669"/>
    <property type="project" value="UniProtKB-UniRule"/>
</dbReference>
<dbReference type="GO" id="GO:0008270">
    <property type="term" value="F:zinc ion binding"/>
    <property type="evidence" value="ECO:0007669"/>
    <property type="project" value="UniProtKB-UniRule"/>
</dbReference>
<dbReference type="GO" id="GO:0006423">
    <property type="term" value="P:cysteinyl-tRNA aminoacylation"/>
    <property type="evidence" value="ECO:0007669"/>
    <property type="project" value="UniProtKB-UniRule"/>
</dbReference>
<dbReference type="Gene3D" id="3.40.50.620">
    <property type="entry name" value="HUPs"/>
    <property type="match status" value="1"/>
</dbReference>
<dbReference type="HAMAP" id="MF_00041">
    <property type="entry name" value="Cys_tRNA_synth"/>
    <property type="match status" value="1"/>
</dbReference>
<dbReference type="InterPro" id="IPR015803">
    <property type="entry name" value="Cys-tRNA-ligase"/>
</dbReference>
<dbReference type="InterPro" id="IPR024909">
    <property type="entry name" value="Cys-tRNA/MSH_ligase"/>
</dbReference>
<dbReference type="InterPro" id="IPR014729">
    <property type="entry name" value="Rossmann-like_a/b/a_fold"/>
</dbReference>
<dbReference type="InterPro" id="IPR032678">
    <property type="entry name" value="tRNA-synt_1_cat_dom"/>
</dbReference>
<dbReference type="PANTHER" id="PTHR10890:SF3">
    <property type="entry name" value="CYSTEINE--TRNA LIGASE, CYTOPLASMIC"/>
    <property type="match status" value="1"/>
</dbReference>
<dbReference type="PANTHER" id="PTHR10890">
    <property type="entry name" value="CYSTEINYL-TRNA SYNTHETASE"/>
    <property type="match status" value="1"/>
</dbReference>
<dbReference type="Pfam" id="PF01406">
    <property type="entry name" value="tRNA-synt_1e"/>
    <property type="match status" value="1"/>
</dbReference>
<dbReference type="PRINTS" id="PR00983">
    <property type="entry name" value="TRNASYNTHCYS"/>
</dbReference>
<dbReference type="SUPFAM" id="SSF52374">
    <property type="entry name" value="Nucleotidylyl transferase"/>
    <property type="match status" value="1"/>
</dbReference>
<keyword id="KW-0030">Aminoacyl-tRNA synthetase</keyword>
<keyword id="KW-0067">ATP-binding</keyword>
<keyword id="KW-0963">Cytoplasm</keyword>
<keyword id="KW-0436">Ligase</keyword>
<keyword id="KW-0479">Metal-binding</keyword>
<keyword id="KW-0547">Nucleotide-binding</keyword>
<keyword id="KW-0648">Protein biosynthesis</keyword>
<keyword id="KW-0862">Zinc</keyword>
<gene>
    <name evidence="1" type="primary">cysS</name>
    <name type="ordered locus">mhp661</name>
</gene>
<accession>Q5ZZP6</accession>
<feature type="chain" id="PRO_0000159429" description="Cysteine--tRNA ligase">
    <location>
        <begin position="1"/>
        <end position="404"/>
    </location>
</feature>
<feature type="short sequence motif" description="'HIGH' region">
    <location>
        <begin position="16"/>
        <end position="26"/>
    </location>
</feature>
<feature type="short sequence motif" description="'KMSKS' region">
    <location>
        <begin position="248"/>
        <end position="252"/>
    </location>
</feature>
<feature type="binding site" evidence="1">
    <location>
        <position position="14"/>
    </location>
    <ligand>
        <name>Zn(2+)</name>
        <dbReference type="ChEBI" id="CHEBI:29105"/>
    </ligand>
</feature>
<feature type="binding site" evidence="1">
    <location>
        <position position="190"/>
    </location>
    <ligand>
        <name>Zn(2+)</name>
        <dbReference type="ChEBI" id="CHEBI:29105"/>
    </ligand>
</feature>
<feature type="binding site" evidence="1">
    <location>
        <position position="216"/>
    </location>
    <ligand>
        <name>Zn(2+)</name>
        <dbReference type="ChEBI" id="CHEBI:29105"/>
    </ligand>
</feature>
<feature type="binding site" evidence="1">
    <location>
        <position position="220"/>
    </location>
    <ligand>
        <name>Zn(2+)</name>
        <dbReference type="ChEBI" id="CHEBI:29105"/>
    </ligand>
</feature>
<feature type="binding site" evidence="1">
    <location>
        <position position="251"/>
    </location>
    <ligand>
        <name>ATP</name>
        <dbReference type="ChEBI" id="CHEBI:30616"/>
    </ligand>
</feature>
<evidence type="ECO:0000255" key="1">
    <source>
        <dbReference type="HAMAP-Rule" id="MF_00041"/>
    </source>
</evidence>
<protein>
    <recommendedName>
        <fullName evidence="1">Cysteine--tRNA ligase</fullName>
        <ecNumber evidence="1">6.1.1.16</ecNumber>
    </recommendedName>
    <alternativeName>
        <fullName evidence="1">Cysteinyl-tRNA synthetase</fullName>
        <shortName evidence="1">CysRS</shortName>
    </alternativeName>
</protein>
<name>SYC_MESH2</name>
<proteinExistence type="inferred from homology"/>
<reference key="1">
    <citation type="journal article" date="2004" name="J. Bacteriol.">
        <title>The genome sequence of Mycoplasma hyopneumoniae strain 232, the agent of swine mycoplasmosis.</title>
        <authorList>
            <person name="Minion F.C."/>
            <person name="Lefkowitz E.J."/>
            <person name="Madsen M.L."/>
            <person name="Cleary B.J."/>
            <person name="Swartzell S.M."/>
            <person name="Mahairas G.G."/>
        </authorList>
    </citation>
    <scope>NUCLEOTIDE SEQUENCE [LARGE SCALE GENOMIC DNA]</scope>
    <source>
        <strain>232</strain>
    </source>
</reference>
<sequence>MNLINKKNLNIYLCGPTVYSDVHIGNLRTIIIFDAIFECLKNKGFSINFLHNITDIDDKIIEKAQELGISEAELTEKYTNEYFKILEIFNIKKPTKIVKVTEKIEKIIEYIKLLEKKGFTYYNKNNDLVFDILKIPNYGIISGQKIESLLDKNTKKTKSKNDFVLWKKTQKGLFFKSFFGLGRPGWHTECAALIYDYFQKKSLDLHGGGVDLIFPHHENENAQHFALTGNPIAENWFRSGFVNLNGKKMAKSLNNVLLAKDFSHKYNPDIIRSIFLSINPTVPINLTEELIKNHKKLIEKYQKICFEWYFDKKNEKTEKVEQVLNLFIEGKFAKANFLIMELIKQKENSTIRKIFLNLRFNFTKMHLNPESQEKIKNWNKLIMDKNYSEADKIRKELWKIFKNS</sequence>
<organism>
    <name type="scientific">Mesomycoplasma hyopneumoniae (strain 232)</name>
    <name type="common">Mycoplasma hyopneumoniae</name>
    <dbReference type="NCBI Taxonomy" id="295358"/>
    <lineage>
        <taxon>Bacteria</taxon>
        <taxon>Bacillati</taxon>
        <taxon>Mycoplasmatota</taxon>
        <taxon>Mycoplasmoidales</taxon>
        <taxon>Metamycoplasmataceae</taxon>
        <taxon>Mesomycoplasma</taxon>
    </lineage>
</organism>